<gene>
    <name type="primary">CBF5</name>
    <name type="ORF">CTHT_0066610</name>
</gene>
<name>CBF5_CHATD</name>
<feature type="chain" id="PRO_5003409223" description="H/ACA ribonucleoprotein complex subunit CBF5">
    <location>
        <begin position="1"/>
        <end position="483"/>
    </location>
</feature>
<feature type="domain" description="PUA" evidence="2">
    <location>
        <begin position="279"/>
        <end position="354"/>
    </location>
</feature>
<feature type="region of interest" description="Disordered" evidence="3">
    <location>
        <begin position="406"/>
        <end position="483"/>
    </location>
</feature>
<feature type="compositionally biased region" description="Low complexity" evidence="3">
    <location>
        <begin position="409"/>
        <end position="428"/>
    </location>
</feature>
<feature type="compositionally biased region" description="Basic and acidic residues" evidence="3">
    <location>
        <begin position="432"/>
        <end position="462"/>
    </location>
</feature>
<feature type="compositionally biased region" description="Basic residues" evidence="3">
    <location>
        <begin position="463"/>
        <end position="476"/>
    </location>
</feature>
<dbReference type="EC" id="5.4.99.-" evidence="1"/>
<dbReference type="EMBL" id="GL988047">
    <property type="protein sequence ID" value="EGS17339.1"/>
    <property type="status" value="ALT_INIT"/>
    <property type="molecule type" value="Genomic_DNA"/>
</dbReference>
<dbReference type="RefSeq" id="XP_006696957.1">
    <property type="nucleotide sequence ID" value="XM_006696894.1"/>
</dbReference>
<dbReference type="SMR" id="G0SGK0"/>
<dbReference type="STRING" id="759272.G0SGK0"/>
<dbReference type="GeneID" id="18260699"/>
<dbReference type="KEGG" id="cthr:CTHT_0066610"/>
<dbReference type="eggNOG" id="KOG2529">
    <property type="taxonomic scope" value="Eukaryota"/>
</dbReference>
<dbReference type="HOGENOM" id="CLU_014935_0_0_1"/>
<dbReference type="OrthoDB" id="10250002at2759"/>
<dbReference type="Proteomes" id="UP000008066">
    <property type="component" value="Unassembled WGS sequence"/>
</dbReference>
<dbReference type="GO" id="GO:0031429">
    <property type="term" value="C:box H/ACA snoRNP complex"/>
    <property type="evidence" value="ECO:0007669"/>
    <property type="project" value="TreeGrafter"/>
</dbReference>
<dbReference type="GO" id="GO:0005874">
    <property type="term" value="C:microtubule"/>
    <property type="evidence" value="ECO:0007669"/>
    <property type="project" value="UniProtKB-KW"/>
</dbReference>
<dbReference type="GO" id="GO:0003677">
    <property type="term" value="F:DNA binding"/>
    <property type="evidence" value="ECO:0007669"/>
    <property type="project" value="UniProtKB-KW"/>
</dbReference>
<dbReference type="GO" id="GO:0003723">
    <property type="term" value="F:RNA binding"/>
    <property type="evidence" value="ECO:0007669"/>
    <property type="project" value="UniProtKB-KW"/>
</dbReference>
<dbReference type="GO" id="GO:0106032">
    <property type="term" value="F:snRNA pseudouridine synthase activity"/>
    <property type="evidence" value="ECO:0007669"/>
    <property type="project" value="RHEA"/>
</dbReference>
<dbReference type="GO" id="GO:0000495">
    <property type="term" value="P:box H/ACA sno(s)RNA 3'-end processing"/>
    <property type="evidence" value="ECO:0007669"/>
    <property type="project" value="TreeGrafter"/>
</dbReference>
<dbReference type="GO" id="GO:0051301">
    <property type="term" value="P:cell division"/>
    <property type="evidence" value="ECO:0007669"/>
    <property type="project" value="UniProtKB-KW"/>
</dbReference>
<dbReference type="GO" id="GO:1990481">
    <property type="term" value="P:mRNA pseudouridine synthesis"/>
    <property type="evidence" value="ECO:0007669"/>
    <property type="project" value="TreeGrafter"/>
</dbReference>
<dbReference type="GO" id="GO:0031118">
    <property type="term" value="P:rRNA pseudouridine synthesis"/>
    <property type="evidence" value="ECO:0007669"/>
    <property type="project" value="TreeGrafter"/>
</dbReference>
<dbReference type="GO" id="GO:0031120">
    <property type="term" value="P:snRNA pseudouridine synthesis"/>
    <property type="evidence" value="ECO:0007669"/>
    <property type="project" value="TreeGrafter"/>
</dbReference>
<dbReference type="CDD" id="cd02572">
    <property type="entry name" value="PseudoU_synth_hDyskerin"/>
    <property type="match status" value="1"/>
</dbReference>
<dbReference type="CDD" id="cd21148">
    <property type="entry name" value="PUA_Cbf5"/>
    <property type="match status" value="1"/>
</dbReference>
<dbReference type="FunFam" id="3.30.2350.10:FF:000001">
    <property type="entry name" value="H/ACA ribonucleoprotein complex subunit CBF5"/>
    <property type="match status" value="1"/>
</dbReference>
<dbReference type="Gene3D" id="3.30.2350.10">
    <property type="entry name" value="Pseudouridine synthase"/>
    <property type="match status" value="1"/>
</dbReference>
<dbReference type="Gene3D" id="2.30.130.10">
    <property type="entry name" value="PUA domain"/>
    <property type="match status" value="1"/>
</dbReference>
<dbReference type="InterPro" id="IPR012960">
    <property type="entry name" value="Dyskerin-like"/>
</dbReference>
<dbReference type="InterPro" id="IPR020103">
    <property type="entry name" value="PsdUridine_synth_cat_dom_sf"/>
</dbReference>
<dbReference type="InterPro" id="IPR002501">
    <property type="entry name" value="PsdUridine_synth_N"/>
</dbReference>
<dbReference type="InterPro" id="IPR002478">
    <property type="entry name" value="PUA"/>
</dbReference>
<dbReference type="InterPro" id="IPR015947">
    <property type="entry name" value="PUA-like_sf"/>
</dbReference>
<dbReference type="InterPro" id="IPR036974">
    <property type="entry name" value="PUA_sf"/>
</dbReference>
<dbReference type="InterPro" id="IPR004802">
    <property type="entry name" value="tRNA_PsdUridine_synth_B_fam"/>
</dbReference>
<dbReference type="InterPro" id="IPR032819">
    <property type="entry name" value="TruB_C"/>
</dbReference>
<dbReference type="InterPro" id="IPR004521">
    <property type="entry name" value="Uncharacterised_CHP00451"/>
</dbReference>
<dbReference type="NCBIfam" id="TIGR00425">
    <property type="entry name" value="CBF5"/>
    <property type="match status" value="1"/>
</dbReference>
<dbReference type="NCBIfam" id="NF003280">
    <property type="entry name" value="PRK04270.1"/>
    <property type="match status" value="1"/>
</dbReference>
<dbReference type="NCBIfam" id="TIGR00451">
    <property type="entry name" value="unchar_dom_2"/>
    <property type="match status" value="1"/>
</dbReference>
<dbReference type="PANTHER" id="PTHR23127">
    <property type="entry name" value="CENTROMERE/MICROTUBULE BINDING PROTEIN CBF5"/>
    <property type="match status" value="1"/>
</dbReference>
<dbReference type="PANTHER" id="PTHR23127:SF0">
    <property type="entry name" value="H_ACA RIBONUCLEOPROTEIN COMPLEX SUBUNIT DKC1"/>
    <property type="match status" value="1"/>
</dbReference>
<dbReference type="Pfam" id="PF08068">
    <property type="entry name" value="DKCLD"/>
    <property type="match status" value="1"/>
</dbReference>
<dbReference type="Pfam" id="PF01472">
    <property type="entry name" value="PUA"/>
    <property type="match status" value="1"/>
</dbReference>
<dbReference type="Pfam" id="PF16198">
    <property type="entry name" value="TruB_C_2"/>
    <property type="match status" value="1"/>
</dbReference>
<dbReference type="Pfam" id="PF01509">
    <property type="entry name" value="TruB_N"/>
    <property type="match status" value="1"/>
</dbReference>
<dbReference type="SMART" id="SM01136">
    <property type="entry name" value="DKCLD"/>
    <property type="match status" value="1"/>
</dbReference>
<dbReference type="SMART" id="SM00359">
    <property type="entry name" value="PUA"/>
    <property type="match status" value="1"/>
</dbReference>
<dbReference type="SUPFAM" id="SSF55120">
    <property type="entry name" value="Pseudouridine synthase"/>
    <property type="match status" value="1"/>
</dbReference>
<dbReference type="SUPFAM" id="SSF88697">
    <property type="entry name" value="PUA domain-like"/>
    <property type="match status" value="1"/>
</dbReference>
<dbReference type="PROSITE" id="PS50890">
    <property type="entry name" value="PUA"/>
    <property type="match status" value="1"/>
</dbReference>
<protein>
    <recommendedName>
        <fullName evidence="4">H/ACA ribonucleoprotein complex subunit CBF5</fullName>
        <ecNumber evidence="1">5.4.99.-</ecNumber>
    </recommendedName>
    <alternativeName>
        <fullName>Centromere-binding factor 5</fullName>
    </alternativeName>
    <alternativeName>
        <fullName>Centromere/microtubule-binding protein CBF5</fullName>
    </alternativeName>
    <alternativeName>
        <fullName>H/ACA snoRNP protein CBF5</fullName>
    </alternativeName>
    <alternativeName>
        <fullName>Small nucleolar RNP protein CBF5</fullName>
    </alternativeName>
</protein>
<sequence length="483" mass="53313">MSGSAAIMKAPAKSEFIIKPENTKAEVDTSNWPGLLKNYDKMLIRTSHFTPIPDHGSAPWSRDIKSYVSSGVINLDKPSNPSSHEVVAWIKRILRVDKTGHSGTLDPKVTGCLIVCIDRATRLVKAQQGAGKEYVCCIRFHDTVPGGEPAFAKALETLTGALFQRPPLISAVKRQLRIRTIHKSRLLEFDNERHLGVFWVSCEAGTYIRTLCVHLGLLLGVGAHMQELRRVRSGVMSEDDGSLVTLHDVLDAQWQYDNNGDEALLRKVIQPLETLLCTYKRLVVKDTAVNAVCYGAKLMIPGLLRYDQGIEQGEEVVLMTTKGEAIAIAIAQMGAVELATCDHGCVAKVKRCIMERDLYPRRWGMGPVASEKKKLKASGLLDKYGRPNEKTPASWLQSYKDYNVSSSEAPALPAPAGADAAAAPSTPALPAPEEKNESEEKSADASDSKKRKKDETAEEKAERKRLKKEKKEKKEKKKSDKDE</sequence>
<keyword id="KW-0131">Cell cycle</keyword>
<keyword id="KW-0132">Cell division</keyword>
<keyword id="KW-0238">DNA-binding</keyword>
<keyword id="KW-0413">Isomerase</keyword>
<keyword id="KW-0493">Microtubule</keyword>
<keyword id="KW-0498">Mitosis</keyword>
<keyword id="KW-0539">Nucleus</keyword>
<keyword id="KW-1185">Reference proteome</keyword>
<keyword id="KW-0677">Repeat</keyword>
<keyword id="KW-0687">Ribonucleoprotein</keyword>
<keyword id="KW-0690">Ribosome biogenesis</keyword>
<keyword id="KW-0694">RNA-binding</keyword>
<keyword id="KW-0698">rRNA processing</keyword>
<reference key="1">
    <citation type="journal article" date="2011" name="Cell">
        <title>Insight into structure and assembly of the nuclear pore complex by utilizing the genome of a eukaryotic thermophile.</title>
        <authorList>
            <person name="Amlacher S."/>
            <person name="Sarges P."/>
            <person name="Flemming D."/>
            <person name="van Noort V."/>
            <person name="Kunze R."/>
            <person name="Devos D.P."/>
            <person name="Arumugam M."/>
            <person name="Bork P."/>
            <person name="Hurt E."/>
        </authorList>
    </citation>
    <scope>NUCLEOTIDE SEQUENCE [LARGE SCALE GENOMIC DNA]</scope>
    <source>
        <strain>DSM 1495 / CBS 144.50 / IMI 039719</strain>
    </source>
</reference>
<accession>G0SGK0</accession>
<comment type="function">
    <text evidence="1">Catalytic subunit of H/ACA small nucleolar ribonucleoprotein (H/ACA snoRNP) complex, which catalyzes pseudouridylation of rRNA. This involves the isomerization of uridine such that the ribose is subsequently attached to C5, instead of the normal N1. Pseudouridine ('psi') residues may serve to stabilize the conformation of rRNAs and play a central role in ribosomal RNA processing. The H/ACA snoRNP complex also mediates pseudouridylation of other types of RNAs. Catalyzes pseudouridylation at position 93 in U2 snRNA. Also catalyzes pseudouridylation of mRNAs; H/ACA-type snoRNAs probably guide pseudouridylation of mRNAs.</text>
</comment>
<comment type="catalytic activity">
    <reaction evidence="1">
        <text>uridine in 5S rRNA = pseudouridine in 5S rRNA</text>
        <dbReference type="Rhea" id="RHEA:47036"/>
        <dbReference type="Rhea" id="RHEA-COMP:11730"/>
        <dbReference type="Rhea" id="RHEA-COMP:11731"/>
        <dbReference type="ChEBI" id="CHEBI:65314"/>
        <dbReference type="ChEBI" id="CHEBI:65315"/>
    </reaction>
</comment>
<comment type="catalytic activity">
    <reaction evidence="1">
        <text>uridine in snRNA = pseudouridine in snRNA</text>
        <dbReference type="Rhea" id="RHEA:51124"/>
        <dbReference type="Rhea" id="RHEA-COMP:12891"/>
        <dbReference type="Rhea" id="RHEA-COMP:12892"/>
        <dbReference type="ChEBI" id="CHEBI:65314"/>
        <dbReference type="ChEBI" id="CHEBI:65315"/>
    </reaction>
</comment>
<comment type="catalytic activity">
    <reaction evidence="1">
        <text>a uridine in mRNA = a pseudouridine in mRNA</text>
        <dbReference type="Rhea" id="RHEA:56644"/>
        <dbReference type="Rhea" id="RHEA-COMP:14658"/>
        <dbReference type="Rhea" id="RHEA-COMP:14659"/>
        <dbReference type="ChEBI" id="CHEBI:65314"/>
        <dbReference type="ChEBI" id="CHEBI:65315"/>
    </reaction>
</comment>
<comment type="subunit">
    <text evidence="1">Component of the small nucleolar ribonucleoprotein particles containing H/ACA-type snoRNAs (H/ACA snoRNPs).</text>
</comment>
<comment type="subcellular location">
    <subcellularLocation>
        <location evidence="1">Nucleus</location>
        <location evidence="1">Nucleolus</location>
    </subcellularLocation>
</comment>
<comment type="similarity">
    <text evidence="4">Belongs to the pseudouridine synthase TruB family.</text>
</comment>
<comment type="sequence caution" evidence="4">
    <conflict type="erroneous initiation">
        <sequence resource="EMBL-CDS" id="EGS17339"/>
    </conflict>
    <text>Extended N-terminus.</text>
</comment>
<evidence type="ECO:0000250" key="1">
    <source>
        <dbReference type="UniProtKB" id="P33322"/>
    </source>
</evidence>
<evidence type="ECO:0000255" key="2">
    <source>
        <dbReference type="PROSITE-ProRule" id="PRU00161"/>
    </source>
</evidence>
<evidence type="ECO:0000256" key="3">
    <source>
        <dbReference type="SAM" id="MobiDB-lite"/>
    </source>
</evidence>
<evidence type="ECO:0000305" key="4"/>
<organism>
    <name type="scientific">Chaetomium thermophilum (strain DSM 1495 / CBS 144.50 / IMI 039719)</name>
    <name type="common">Thermochaetoides thermophila</name>
    <dbReference type="NCBI Taxonomy" id="759272"/>
    <lineage>
        <taxon>Eukaryota</taxon>
        <taxon>Fungi</taxon>
        <taxon>Dikarya</taxon>
        <taxon>Ascomycota</taxon>
        <taxon>Pezizomycotina</taxon>
        <taxon>Sordariomycetes</taxon>
        <taxon>Sordariomycetidae</taxon>
        <taxon>Sordariales</taxon>
        <taxon>Chaetomiaceae</taxon>
        <taxon>Thermochaetoides</taxon>
    </lineage>
</organism>
<proteinExistence type="inferred from homology"/>